<evidence type="ECO:0000250" key="1">
    <source>
        <dbReference type="UniProtKB" id="P11590"/>
    </source>
</evidence>
<evidence type="ECO:0000250" key="2">
    <source>
        <dbReference type="UniProtKB" id="Q5FW60"/>
    </source>
</evidence>
<evidence type="ECO:0000255" key="3"/>
<evidence type="ECO:0000255" key="4">
    <source>
        <dbReference type="RuleBase" id="RU003695"/>
    </source>
</evidence>
<evidence type="ECO:0000303" key="5">
    <source>
    </source>
</evidence>
<evidence type="ECO:0000305" key="6"/>
<evidence type="ECO:0000312" key="7">
    <source>
        <dbReference type="EMBL" id="DAA06312.1"/>
    </source>
</evidence>
<evidence type="ECO:0000312" key="8">
    <source>
        <dbReference type="MGI" id="MGI:3705220"/>
    </source>
</evidence>
<evidence type="ECO:0000312" key="9">
    <source>
        <dbReference type="Proteomes" id="UP000000589"/>
    </source>
</evidence>
<comment type="function">
    <text evidence="6">Major urinary proteins (Mups) bind pheromones, and thus stabilize them to allow slow release into the air from urine marks. May protect pheromones from oxidation. May also act as pheromones themselves. In this context, they play a role in the regulation of social behaviors, such as aggression, mating, pup-suckling, territory establishment and dominance.</text>
</comment>
<comment type="subcellular location">
    <subcellularLocation>
        <location evidence="2">Secreted</location>
    </subcellularLocation>
</comment>
<comment type="similarity">
    <text evidence="4">Belongs to the calycin superfamily. Lipocalin family.</text>
</comment>
<proteinExistence type="inferred from homology"/>
<protein>
    <recommendedName>
        <fullName evidence="8">Major urinary protein 18</fullName>
    </recommendedName>
</protein>
<accession>A2BIM8</accession>
<feature type="signal peptide" evidence="3">
    <location>
        <begin position="1"/>
        <end position="19"/>
    </location>
</feature>
<feature type="chain" id="PRO_5005334073" description="Major urinary protein 18" evidence="3">
    <location>
        <begin position="20"/>
        <end position="181"/>
    </location>
</feature>
<feature type="disulfide bond" evidence="1">
    <location>
        <begin position="83"/>
        <end position="176"/>
    </location>
</feature>
<reference evidence="9" key="1">
    <citation type="journal article" date="2009" name="PLoS Biol.">
        <title>Lineage-specific biology revealed by a finished genome assembly of the mouse.</title>
        <authorList>
            <person name="Church D.M."/>
            <person name="Goodstadt L."/>
            <person name="Hillier L.W."/>
            <person name="Zody M.C."/>
            <person name="Goldstein S."/>
            <person name="She X."/>
            <person name="Bult C.J."/>
            <person name="Agarwala R."/>
            <person name="Cherry J.L."/>
            <person name="DiCuccio M."/>
            <person name="Hlavina W."/>
            <person name="Kapustin Y."/>
            <person name="Meric P."/>
            <person name="Maglott D."/>
            <person name="Birtle Z."/>
            <person name="Marques A.C."/>
            <person name="Graves T."/>
            <person name="Zhou S."/>
            <person name="Teague B."/>
            <person name="Potamousis K."/>
            <person name="Churas C."/>
            <person name="Place M."/>
            <person name="Herschleb J."/>
            <person name="Runnheim R."/>
            <person name="Forrest D."/>
            <person name="Amos-Landgraf J."/>
            <person name="Schwartz D.C."/>
            <person name="Cheng Z."/>
            <person name="Lindblad-Toh K."/>
            <person name="Eichler E.E."/>
            <person name="Ponting C.P."/>
        </authorList>
    </citation>
    <scope>NUCLEOTIDE SEQUENCE [LARGE SCALE GENOMIC DNA]</scope>
    <source>
        <strain evidence="9">C57BL/6J</strain>
    </source>
</reference>
<reference evidence="7" key="2">
    <citation type="journal article" date="2008" name="PLoS ONE">
        <title>Species specificity in major urinary proteins by parallel evolution.</title>
        <authorList>
            <person name="Logan D.W."/>
            <person name="Marton T.F."/>
            <person name="Stowers L."/>
        </authorList>
    </citation>
    <scope>IDENTIFICATION</scope>
</reference>
<name>MUP18_MOUSE</name>
<keyword id="KW-0085">Behavior</keyword>
<keyword id="KW-1015">Disulfide bond</keyword>
<keyword id="KW-0590">Pheromone-binding</keyword>
<keyword id="KW-1185">Reference proteome</keyword>
<keyword id="KW-0964">Secreted</keyword>
<keyword id="KW-0732">Signal</keyword>
<keyword id="KW-0813">Transport</keyword>
<dbReference type="EMBL" id="BX470151">
    <property type="status" value="NOT_ANNOTATED_CDS"/>
    <property type="molecule type" value="Genomic_DNA"/>
</dbReference>
<dbReference type="EMBL" id="BK006667">
    <property type="protein sequence ID" value="DAA06312.1"/>
    <property type="molecule type" value="Genomic_DNA"/>
</dbReference>
<dbReference type="CCDS" id="CCDS51199.1"/>
<dbReference type="RefSeq" id="NP_001157998.1">
    <property type="nucleotide sequence ID" value="NM_001164526.1"/>
</dbReference>
<dbReference type="RefSeq" id="NP_001186262.1">
    <property type="nucleotide sequence ID" value="NM_001199333.1"/>
</dbReference>
<dbReference type="SMR" id="A2BIM8"/>
<dbReference type="FunCoup" id="A2BIM8">
    <property type="interactions" value="308"/>
</dbReference>
<dbReference type="Allergome" id="478">
    <property type="allergen name" value="Mus m 1"/>
</dbReference>
<dbReference type="iPTMnet" id="A2BIM8"/>
<dbReference type="PhosphoSitePlus" id="A2BIM8"/>
<dbReference type="SwissPalm" id="A2BIM8"/>
<dbReference type="jPOST" id="A2BIM8"/>
<dbReference type="DNASU" id="100048884"/>
<dbReference type="Ensembl" id="ENSMUST00000098040.4">
    <property type="protein sequence ID" value="ENSMUSP00000095648.4"/>
    <property type="gene ID" value="ENSMUSG00000078674.3"/>
</dbReference>
<dbReference type="Ensembl" id="ENSMUST00000098046.10">
    <property type="protein sequence ID" value="ENSMUSP00000095654.4"/>
    <property type="gene ID" value="ENSMUSG00000073834.11"/>
</dbReference>
<dbReference type="GeneID" id="100039028"/>
<dbReference type="GeneID" id="100048884"/>
<dbReference type="KEGG" id="mmu:100039028"/>
<dbReference type="KEGG" id="mmu:100048884"/>
<dbReference type="UCSC" id="uc008taw.3">
    <property type="organism name" value="mouse"/>
</dbReference>
<dbReference type="AGR" id="MGI:3705220"/>
<dbReference type="CTD" id="100039028"/>
<dbReference type="CTD" id="100048884"/>
<dbReference type="MGI" id="MGI:3705220">
    <property type="gene designation" value="Mup18"/>
</dbReference>
<dbReference type="VEuPathDB" id="HostDB:ENSMUSG00000073834"/>
<dbReference type="VEuPathDB" id="HostDB:ENSMUSG00000078674"/>
<dbReference type="HOGENOM" id="CLU_094061_4_0_1"/>
<dbReference type="InParanoid" id="A2BIM8"/>
<dbReference type="OMA" id="ISEHDNM"/>
<dbReference type="PhylomeDB" id="A2BIM8"/>
<dbReference type="TreeFam" id="TF338197"/>
<dbReference type="BioGRID-ORCS" id="100039028">
    <property type="hits" value="2 hits in 13 CRISPR screens"/>
</dbReference>
<dbReference type="BioGRID-ORCS" id="100048884">
    <property type="hits" value="4 hits in 28 CRISPR screens"/>
</dbReference>
<dbReference type="ChiTaRS" id="Mup18">
    <property type="organism name" value="mouse"/>
</dbReference>
<dbReference type="PRO" id="PR:A2BIM8"/>
<dbReference type="Proteomes" id="UP000000589">
    <property type="component" value="Chromosome 4"/>
</dbReference>
<dbReference type="RNAct" id="A2BIM8">
    <property type="molecule type" value="protein"/>
</dbReference>
<dbReference type="Bgee" id="ENSMUSG00000073834">
    <property type="expression patterns" value="Expressed in liver and 38 other cell types or tissues"/>
</dbReference>
<dbReference type="ExpressionAtlas" id="A2BIM8">
    <property type="expression patterns" value="baseline and differential"/>
</dbReference>
<dbReference type="GO" id="GO:0005576">
    <property type="term" value="C:extracellular region"/>
    <property type="evidence" value="ECO:0007669"/>
    <property type="project" value="UniProtKB-SubCell"/>
</dbReference>
<dbReference type="GO" id="GO:0005550">
    <property type="term" value="F:pheromone binding"/>
    <property type="evidence" value="ECO:0007669"/>
    <property type="project" value="UniProtKB-KW"/>
</dbReference>
<dbReference type="GO" id="GO:0036094">
    <property type="term" value="F:small molecule binding"/>
    <property type="evidence" value="ECO:0007669"/>
    <property type="project" value="InterPro"/>
</dbReference>
<dbReference type="CDD" id="cd19428">
    <property type="entry name" value="lipocalin_MUP-like"/>
    <property type="match status" value="1"/>
</dbReference>
<dbReference type="FunFam" id="2.40.128.20:FF:000008">
    <property type="entry name" value="Major urinary protein"/>
    <property type="match status" value="1"/>
</dbReference>
<dbReference type="Gene3D" id="2.40.128.20">
    <property type="match status" value="1"/>
</dbReference>
<dbReference type="InterPro" id="IPR012674">
    <property type="entry name" value="Calycin"/>
</dbReference>
<dbReference type="InterPro" id="IPR002345">
    <property type="entry name" value="Lipocalin"/>
</dbReference>
<dbReference type="InterPro" id="IPR022272">
    <property type="entry name" value="Lipocalin_CS"/>
</dbReference>
<dbReference type="InterPro" id="IPR000566">
    <property type="entry name" value="Lipocln_cytosolic_FA-bd_dom"/>
</dbReference>
<dbReference type="InterPro" id="IPR002971">
    <property type="entry name" value="Maj_urinary"/>
</dbReference>
<dbReference type="PANTHER" id="PTHR11430">
    <property type="entry name" value="LIPOCALIN"/>
    <property type="match status" value="1"/>
</dbReference>
<dbReference type="PANTHER" id="PTHR11430:SF76">
    <property type="entry name" value="MAJOR URINARY PROTEIN 1-RELATED"/>
    <property type="match status" value="1"/>
</dbReference>
<dbReference type="Pfam" id="PF00061">
    <property type="entry name" value="Lipocalin"/>
    <property type="match status" value="1"/>
</dbReference>
<dbReference type="PRINTS" id="PR00179">
    <property type="entry name" value="LIPOCALIN"/>
</dbReference>
<dbReference type="PRINTS" id="PR01221">
    <property type="entry name" value="MAJORURINARY"/>
</dbReference>
<dbReference type="SUPFAM" id="SSF50814">
    <property type="entry name" value="Lipocalins"/>
    <property type="match status" value="1"/>
</dbReference>
<dbReference type="PROSITE" id="PS00213">
    <property type="entry name" value="LIPOCALIN"/>
    <property type="match status" value="1"/>
</dbReference>
<gene>
    <name evidence="8" type="primary">Mup18</name>
    <name evidence="5" type="synonym">Mup16</name>
</gene>
<organism>
    <name type="scientific">Mus musculus</name>
    <name type="common">Mouse</name>
    <dbReference type="NCBI Taxonomy" id="10090"/>
    <lineage>
        <taxon>Eukaryota</taxon>
        <taxon>Metazoa</taxon>
        <taxon>Chordata</taxon>
        <taxon>Craniata</taxon>
        <taxon>Vertebrata</taxon>
        <taxon>Euteleostomi</taxon>
        <taxon>Mammalia</taxon>
        <taxon>Eutheria</taxon>
        <taxon>Euarchontoglires</taxon>
        <taxon>Glires</taxon>
        <taxon>Rodentia</taxon>
        <taxon>Myomorpha</taxon>
        <taxon>Muroidea</taxon>
        <taxon>Muridae</taxon>
        <taxon>Murinae</taxon>
        <taxon>Mus</taxon>
        <taxon>Mus</taxon>
    </lineage>
</organism>
<sequence>MKMLLLLLCLGLTLVCVHAEEASSTGRNFNVEKINGEWHTIILASDKREKIEDNGNFRLFLEQIHVLENSLVLKFHTVRDEECSELSMVADKTEKAGEYSVTYDGFNTFTIPKTDYDNFLMAHLINEKDGETFQLMGLYGREPDLSSDIKERFAQLCEEHGILRENIIDLSNANRCLQARE</sequence>